<proteinExistence type="inferred from homology"/>
<sequence length="270" mass="30401">MSDQQQLPVYKIALGIEYDGSKYYGWQRQNEVRSVQEKLEKALSQVANEPITVFCAGRTDAGVHGTGQVVHFETTAQRKDAAWTLGVNANLPGDIAVRWVKAVPDDFHARFSATARRYRYIIYNHRLRPAVLSKGVTHFYEPLDAERMHRAAQCLLGENDFTSFRAVQCQSRTPWRNVMHINVTRHGPYVVVDIKANAFVHHMVRNIVGSLMEVGAHNQPESWIAELLAAKDRTLAAATAKAEGLYLVAVDYPDRYDLPKPPMGPLFLAD</sequence>
<protein>
    <recommendedName>
        <fullName evidence="1">tRNA pseudouridine synthase A</fullName>
        <ecNumber evidence="1">5.4.99.12</ecNumber>
    </recommendedName>
    <alternativeName>
        <fullName evidence="1">tRNA pseudouridine(38-40) synthase</fullName>
    </alternativeName>
    <alternativeName>
        <fullName evidence="1">tRNA pseudouridylate synthase I</fullName>
    </alternativeName>
    <alternativeName>
        <fullName evidence="1">tRNA-uridine isomerase I</fullName>
    </alternativeName>
</protein>
<evidence type="ECO:0000255" key="1">
    <source>
        <dbReference type="HAMAP-Rule" id="MF_00171"/>
    </source>
</evidence>
<name>TRUA_SHIFL</name>
<keyword id="KW-0413">Isomerase</keyword>
<keyword id="KW-1185">Reference proteome</keyword>
<keyword id="KW-0819">tRNA processing</keyword>
<comment type="function">
    <text evidence="1">Formation of pseudouridine at positions 38, 39 and 40 in the anticodon stem and loop of transfer RNAs.</text>
</comment>
<comment type="catalytic activity">
    <reaction evidence="1">
        <text>uridine(38/39/40) in tRNA = pseudouridine(38/39/40) in tRNA</text>
        <dbReference type="Rhea" id="RHEA:22376"/>
        <dbReference type="Rhea" id="RHEA-COMP:10085"/>
        <dbReference type="Rhea" id="RHEA-COMP:10087"/>
        <dbReference type="ChEBI" id="CHEBI:65314"/>
        <dbReference type="ChEBI" id="CHEBI:65315"/>
        <dbReference type="EC" id="5.4.99.12"/>
    </reaction>
</comment>
<comment type="subunit">
    <text evidence="1">Homodimer.</text>
</comment>
<comment type="similarity">
    <text evidence="1">Belongs to the tRNA pseudouridine synthase TruA family.</text>
</comment>
<accession>Q83QR3</accession>
<gene>
    <name evidence="1" type="primary">truA</name>
    <name type="ordered locus">SF2394</name>
    <name type="ordered locus">S2529</name>
</gene>
<organism>
    <name type="scientific">Shigella flexneri</name>
    <dbReference type="NCBI Taxonomy" id="623"/>
    <lineage>
        <taxon>Bacteria</taxon>
        <taxon>Pseudomonadati</taxon>
        <taxon>Pseudomonadota</taxon>
        <taxon>Gammaproteobacteria</taxon>
        <taxon>Enterobacterales</taxon>
        <taxon>Enterobacteriaceae</taxon>
        <taxon>Shigella</taxon>
    </lineage>
</organism>
<dbReference type="EC" id="5.4.99.12" evidence="1"/>
<dbReference type="EMBL" id="AE005674">
    <property type="protein sequence ID" value="AAN43907.1"/>
    <property type="molecule type" value="Genomic_DNA"/>
</dbReference>
<dbReference type="EMBL" id="AE014073">
    <property type="protein sequence ID" value="AAP17725.1"/>
    <property type="molecule type" value="Genomic_DNA"/>
</dbReference>
<dbReference type="RefSeq" id="NP_708200.1">
    <property type="nucleotide sequence ID" value="NC_004337.2"/>
</dbReference>
<dbReference type="RefSeq" id="WP_001283581.1">
    <property type="nucleotide sequence ID" value="NZ_WPGW01000016.1"/>
</dbReference>
<dbReference type="SMR" id="Q83QR3"/>
<dbReference type="STRING" id="198214.SF2394"/>
<dbReference type="PaxDb" id="198214-SF2394"/>
<dbReference type="GeneID" id="1025534"/>
<dbReference type="GeneID" id="75202599"/>
<dbReference type="KEGG" id="sfl:SF2394"/>
<dbReference type="KEGG" id="sfx:S2529"/>
<dbReference type="PATRIC" id="fig|198214.7.peg.2861"/>
<dbReference type="HOGENOM" id="CLU_014673_0_2_6"/>
<dbReference type="Proteomes" id="UP000001006">
    <property type="component" value="Chromosome"/>
</dbReference>
<dbReference type="Proteomes" id="UP000002673">
    <property type="component" value="Chromosome"/>
</dbReference>
<dbReference type="GO" id="GO:0003723">
    <property type="term" value="F:RNA binding"/>
    <property type="evidence" value="ECO:0007669"/>
    <property type="project" value="InterPro"/>
</dbReference>
<dbReference type="GO" id="GO:0160147">
    <property type="term" value="F:tRNA pseudouridine(38-40) synthase activity"/>
    <property type="evidence" value="ECO:0007669"/>
    <property type="project" value="UniProtKB-EC"/>
</dbReference>
<dbReference type="GO" id="GO:0031119">
    <property type="term" value="P:tRNA pseudouridine synthesis"/>
    <property type="evidence" value="ECO:0007669"/>
    <property type="project" value="UniProtKB-UniRule"/>
</dbReference>
<dbReference type="CDD" id="cd02570">
    <property type="entry name" value="PseudoU_synth_EcTruA"/>
    <property type="match status" value="1"/>
</dbReference>
<dbReference type="FunFam" id="3.30.70.580:FF:000001">
    <property type="entry name" value="tRNA pseudouridine synthase A"/>
    <property type="match status" value="1"/>
</dbReference>
<dbReference type="FunFam" id="3.30.70.660:FF:000001">
    <property type="entry name" value="tRNA pseudouridine synthase A"/>
    <property type="match status" value="1"/>
</dbReference>
<dbReference type="Gene3D" id="3.30.70.660">
    <property type="entry name" value="Pseudouridine synthase I, catalytic domain, C-terminal subdomain"/>
    <property type="match status" value="1"/>
</dbReference>
<dbReference type="Gene3D" id="3.30.70.580">
    <property type="entry name" value="Pseudouridine synthase I, catalytic domain, N-terminal subdomain"/>
    <property type="match status" value="1"/>
</dbReference>
<dbReference type="HAMAP" id="MF_00171">
    <property type="entry name" value="TruA"/>
    <property type="match status" value="1"/>
</dbReference>
<dbReference type="InterPro" id="IPR020103">
    <property type="entry name" value="PsdUridine_synth_cat_dom_sf"/>
</dbReference>
<dbReference type="InterPro" id="IPR001406">
    <property type="entry name" value="PsdUridine_synth_TruA"/>
</dbReference>
<dbReference type="InterPro" id="IPR020097">
    <property type="entry name" value="PsdUridine_synth_TruA_a/b_dom"/>
</dbReference>
<dbReference type="InterPro" id="IPR020095">
    <property type="entry name" value="PsdUridine_synth_TruA_C"/>
</dbReference>
<dbReference type="InterPro" id="IPR020094">
    <property type="entry name" value="TruA/RsuA/RluB/E/F_N"/>
</dbReference>
<dbReference type="NCBIfam" id="TIGR00071">
    <property type="entry name" value="hisT_truA"/>
    <property type="match status" value="1"/>
</dbReference>
<dbReference type="PANTHER" id="PTHR11142">
    <property type="entry name" value="PSEUDOURIDYLATE SYNTHASE"/>
    <property type="match status" value="1"/>
</dbReference>
<dbReference type="PANTHER" id="PTHR11142:SF0">
    <property type="entry name" value="TRNA PSEUDOURIDINE SYNTHASE-LIKE 1"/>
    <property type="match status" value="1"/>
</dbReference>
<dbReference type="Pfam" id="PF01416">
    <property type="entry name" value="PseudoU_synth_1"/>
    <property type="match status" value="2"/>
</dbReference>
<dbReference type="PIRSF" id="PIRSF001430">
    <property type="entry name" value="tRNA_psdUrid_synth"/>
    <property type="match status" value="1"/>
</dbReference>
<dbReference type="SUPFAM" id="SSF55120">
    <property type="entry name" value="Pseudouridine synthase"/>
    <property type="match status" value="1"/>
</dbReference>
<reference key="1">
    <citation type="journal article" date="2002" name="Nucleic Acids Res.">
        <title>Genome sequence of Shigella flexneri 2a: insights into pathogenicity through comparison with genomes of Escherichia coli K12 and O157.</title>
        <authorList>
            <person name="Jin Q."/>
            <person name="Yuan Z."/>
            <person name="Xu J."/>
            <person name="Wang Y."/>
            <person name="Shen Y."/>
            <person name="Lu W."/>
            <person name="Wang J."/>
            <person name="Liu H."/>
            <person name="Yang J."/>
            <person name="Yang F."/>
            <person name="Zhang X."/>
            <person name="Zhang J."/>
            <person name="Yang G."/>
            <person name="Wu H."/>
            <person name="Qu D."/>
            <person name="Dong J."/>
            <person name="Sun L."/>
            <person name="Xue Y."/>
            <person name="Zhao A."/>
            <person name="Gao Y."/>
            <person name="Zhu J."/>
            <person name="Kan B."/>
            <person name="Ding K."/>
            <person name="Chen S."/>
            <person name="Cheng H."/>
            <person name="Yao Z."/>
            <person name="He B."/>
            <person name="Chen R."/>
            <person name="Ma D."/>
            <person name="Qiang B."/>
            <person name="Wen Y."/>
            <person name="Hou Y."/>
            <person name="Yu J."/>
        </authorList>
    </citation>
    <scope>NUCLEOTIDE SEQUENCE [LARGE SCALE GENOMIC DNA]</scope>
    <source>
        <strain>301 / Serotype 2a</strain>
    </source>
</reference>
<reference key="2">
    <citation type="journal article" date="2003" name="Infect. Immun.">
        <title>Complete genome sequence and comparative genomics of Shigella flexneri serotype 2a strain 2457T.</title>
        <authorList>
            <person name="Wei J."/>
            <person name="Goldberg M.B."/>
            <person name="Burland V."/>
            <person name="Venkatesan M.M."/>
            <person name="Deng W."/>
            <person name="Fournier G."/>
            <person name="Mayhew G.F."/>
            <person name="Plunkett G. III"/>
            <person name="Rose D.J."/>
            <person name="Darling A."/>
            <person name="Mau B."/>
            <person name="Perna N.T."/>
            <person name="Payne S.M."/>
            <person name="Runyen-Janecky L.J."/>
            <person name="Zhou S."/>
            <person name="Schwartz D.C."/>
            <person name="Blattner F.R."/>
        </authorList>
    </citation>
    <scope>NUCLEOTIDE SEQUENCE [LARGE SCALE GENOMIC DNA]</scope>
    <source>
        <strain>ATCC 700930 / 2457T / Serotype 2a</strain>
    </source>
</reference>
<feature type="chain" id="PRO_0000057446" description="tRNA pseudouridine synthase A">
    <location>
        <begin position="1"/>
        <end position="270"/>
    </location>
</feature>
<feature type="region of interest" description="RNA binding" evidence="1">
    <location>
        <begin position="107"/>
        <end position="111"/>
    </location>
</feature>
<feature type="region of interest" description="Interaction with tRNA" evidence="1">
    <location>
        <begin position="168"/>
        <end position="172"/>
    </location>
</feature>
<feature type="active site" description="Nucleophile" evidence="1">
    <location>
        <position position="60"/>
    </location>
</feature>
<feature type="binding site" evidence="1">
    <location>
        <position position="118"/>
    </location>
    <ligand>
        <name>substrate</name>
    </ligand>
</feature>
<feature type="site" description="Interaction with tRNA; Important for base-flipping" evidence="1">
    <location>
        <position position="58"/>
    </location>
</feature>
<feature type="site" description="Interaction with tRNA" evidence="1">
    <location>
        <position position="78"/>
    </location>
</feature>
<feature type="site" description="Interaction with tRNA" evidence="1">
    <location>
        <position position="110"/>
    </location>
</feature>
<feature type="site" description="Interaction with tRNA" evidence="1">
    <location>
        <position position="126"/>
    </location>
</feature>
<feature type="site" description="Interaction with tRNA" evidence="1">
    <location>
        <position position="139"/>
    </location>
</feature>